<protein>
    <recommendedName>
        <fullName evidence="1">Shikimate dehydrogenase (NADP(+))</fullName>
        <shortName evidence="1">SDH</shortName>
        <ecNumber evidence="1">1.1.1.25</ecNumber>
    </recommendedName>
</protein>
<sequence length="275" mass="31212">MISPSTKLYGLIGYPLGHSISFYIHNAAFRALSIDALYINIPIEPESFSKAILGIKYLPIYGLNVTIPHKERIIDFLDEISVISKLIGAVNTVYLEENKWKGENTDFGGFLETLKELKLDKDLPCLILGAGGAARAVVYAVIEYGFKEIYLTNRTYGRAERIAEEVKKNKNIEIKIIPWQERHKVDEKLILINTTSIGLDGKSTPWNGNFKSIAFVYDIIYNPKETPLLSLAKENNVPFKNGLDMLIYQACLSWNKWFGFIGPFEIMKREAEKLL</sequence>
<evidence type="ECO:0000255" key="1">
    <source>
        <dbReference type="HAMAP-Rule" id="MF_00222"/>
    </source>
</evidence>
<proteinExistence type="inferred from homology"/>
<gene>
    <name evidence="1" type="primary">aroE</name>
    <name type="ordered locus">DICTH_0912</name>
</gene>
<comment type="function">
    <text evidence="1">Involved in the biosynthesis of the chorismate, which leads to the biosynthesis of aromatic amino acids. Catalyzes the reversible NADPH linked reduction of 3-dehydroshikimate (DHSA) to yield shikimate (SA).</text>
</comment>
<comment type="catalytic activity">
    <reaction evidence="1">
        <text>shikimate + NADP(+) = 3-dehydroshikimate + NADPH + H(+)</text>
        <dbReference type="Rhea" id="RHEA:17737"/>
        <dbReference type="ChEBI" id="CHEBI:15378"/>
        <dbReference type="ChEBI" id="CHEBI:16630"/>
        <dbReference type="ChEBI" id="CHEBI:36208"/>
        <dbReference type="ChEBI" id="CHEBI:57783"/>
        <dbReference type="ChEBI" id="CHEBI:58349"/>
        <dbReference type="EC" id="1.1.1.25"/>
    </reaction>
</comment>
<comment type="pathway">
    <text evidence="1">Metabolic intermediate biosynthesis; chorismate biosynthesis; chorismate from D-erythrose 4-phosphate and phosphoenolpyruvate: step 4/7.</text>
</comment>
<comment type="subunit">
    <text evidence="1">Homodimer.</text>
</comment>
<comment type="similarity">
    <text evidence="1">Belongs to the shikimate dehydrogenase family.</text>
</comment>
<feature type="chain" id="PRO_1000100114" description="Shikimate dehydrogenase (NADP(+))">
    <location>
        <begin position="1"/>
        <end position="275"/>
    </location>
</feature>
<feature type="active site" description="Proton acceptor" evidence="1">
    <location>
        <position position="70"/>
    </location>
</feature>
<feature type="binding site" evidence="1">
    <location>
        <begin position="19"/>
        <end position="21"/>
    </location>
    <ligand>
        <name>shikimate</name>
        <dbReference type="ChEBI" id="CHEBI:36208"/>
    </ligand>
</feature>
<feature type="binding site" evidence="1">
    <location>
        <position position="66"/>
    </location>
    <ligand>
        <name>shikimate</name>
        <dbReference type="ChEBI" id="CHEBI:36208"/>
    </ligand>
</feature>
<feature type="binding site" evidence="1">
    <location>
        <position position="91"/>
    </location>
    <ligand>
        <name>shikimate</name>
        <dbReference type="ChEBI" id="CHEBI:36208"/>
    </ligand>
</feature>
<feature type="binding site" evidence="1">
    <location>
        <position position="106"/>
    </location>
    <ligand>
        <name>shikimate</name>
        <dbReference type="ChEBI" id="CHEBI:36208"/>
    </ligand>
</feature>
<feature type="binding site" evidence="1">
    <location>
        <begin position="129"/>
        <end position="133"/>
    </location>
    <ligand>
        <name>NADP(+)</name>
        <dbReference type="ChEBI" id="CHEBI:58349"/>
    </ligand>
</feature>
<feature type="binding site" evidence="1">
    <location>
        <begin position="153"/>
        <end position="158"/>
    </location>
    <ligand>
        <name>NADP(+)</name>
        <dbReference type="ChEBI" id="CHEBI:58349"/>
    </ligand>
</feature>
<feature type="binding site" evidence="1">
    <location>
        <position position="219"/>
    </location>
    <ligand>
        <name>NADP(+)</name>
        <dbReference type="ChEBI" id="CHEBI:58349"/>
    </ligand>
</feature>
<feature type="binding site" evidence="1">
    <location>
        <position position="221"/>
    </location>
    <ligand>
        <name>shikimate</name>
        <dbReference type="ChEBI" id="CHEBI:36208"/>
    </ligand>
</feature>
<feature type="binding site" evidence="1">
    <location>
        <position position="242"/>
    </location>
    <ligand>
        <name>NADP(+)</name>
        <dbReference type="ChEBI" id="CHEBI:58349"/>
    </ligand>
</feature>
<keyword id="KW-0028">Amino-acid biosynthesis</keyword>
<keyword id="KW-0057">Aromatic amino acid biosynthesis</keyword>
<keyword id="KW-0521">NADP</keyword>
<keyword id="KW-0560">Oxidoreductase</keyword>
<accession>B5YE16</accession>
<dbReference type="EC" id="1.1.1.25" evidence="1"/>
<dbReference type="EMBL" id="CP001146">
    <property type="protein sequence ID" value="ACI19058.1"/>
    <property type="molecule type" value="Genomic_DNA"/>
</dbReference>
<dbReference type="RefSeq" id="WP_012547690.1">
    <property type="nucleotide sequence ID" value="NC_011297.1"/>
</dbReference>
<dbReference type="SMR" id="B5YE16"/>
<dbReference type="STRING" id="309799.DICTH_0912"/>
<dbReference type="PaxDb" id="309799-DICTH_0912"/>
<dbReference type="KEGG" id="dth:DICTH_0912"/>
<dbReference type="eggNOG" id="COG0169">
    <property type="taxonomic scope" value="Bacteria"/>
</dbReference>
<dbReference type="HOGENOM" id="CLU_044063_0_1_0"/>
<dbReference type="OrthoDB" id="9792692at2"/>
<dbReference type="UniPathway" id="UPA00053">
    <property type="reaction ID" value="UER00087"/>
</dbReference>
<dbReference type="Proteomes" id="UP000001733">
    <property type="component" value="Chromosome"/>
</dbReference>
<dbReference type="GO" id="GO:0005829">
    <property type="term" value="C:cytosol"/>
    <property type="evidence" value="ECO:0007669"/>
    <property type="project" value="TreeGrafter"/>
</dbReference>
<dbReference type="GO" id="GO:0050661">
    <property type="term" value="F:NADP binding"/>
    <property type="evidence" value="ECO:0007669"/>
    <property type="project" value="InterPro"/>
</dbReference>
<dbReference type="GO" id="GO:0004764">
    <property type="term" value="F:shikimate 3-dehydrogenase (NADP+) activity"/>
    <property type="evidence" value="ECO:0007669"/>
    <property type="project" value="UniProtKB-UniRule"/>
</dbReference>
<dbReference type="GO" id="GO:0008652">
    <property type="term" value="P:amino acid biosynthetic process"/>
    <property type="evidence" value="ECO:0007669"/>
    <property type="project" value="UniProtKB-KW"/>
</dbReference>
<dbReference type="GO" id="GO:0009073">
    <property type="term" value="P:aromatic amino acid family biosynthetic process"/>
    <property type="evidence" value="ECO:0007669"/>
    <property type="project" value="UniProtKB-KW"/>
</dbReference>
<dbReference type="GO" id="GO:0009423">
    <property type="term" value="P:chorismate biosynthetic process"/>
    <property type="evidence" value="ECO:0007669"/>
    <property type="project" value="UniProtKB-UniRule"/>
</dbReference>
<dbReference type="GO" id="GO:0019632">
    <property type="term" value="P:shikimate metabolic process"/>
    <property type="evidence" value="ECO:0007669"/>
    <property type="project" value="InterPro"/>
</dbReference>
<dbReference type="CDD" id="cd01065">
    <property type="entry name" value="NAD_bind_Shikimate_DH"/>
    <property type="match status" value="1"/>
</dbReference>
<dbReference type="Gene3D" id="3.40.50.10860">
    <property type="entry name" value="Leucine Dehydrogenase, chain A, domain 1"/>
    <property type="match status" value="1"/>
</dbReference>
<dbReference type="Gene3D" id="3.40.50.720">
    <property type="entry name" value="NAD(P)-binding Rossmann-like Domain"/>
    <property type="match status" value="1"/>
</dbReference>
<dbReference type="HAMAP" id="MF_00222">
    <property type="entry name" value="Shikimate_DH_AroE"/>
    <property type="match status" value="1"/>
</dbReference>
<dbReference type="InterPro" id="IPR046346">
    <property type="entry name" value="Aminoacid_DH-like_N_sf"/>
</dbReference>
<dbReference type="InterPro" id="IPR036291">
    <property type="entry name" value="NAD(P)-bd_dom_sf"/>
</dbReference>
<dbReference type="InterPro" id="IPR041121">
    <property type="entry name" value="SDH_C"/>
</dbReference>
<dbReference type="InterPro" id="IPR011342">
    <property type="entry name" value="Shikimate_DH"/>
</dbReference>
<dbReference type="InterPro" id="IPR013708">
    <property type="entry name" value="Shikimate_DH-bd_N"/>
</dbReference>
<dbReference type="InterPro" id="IPR022893">
    <property type="entry name" value="Shikimate_DH_fam"/>
</dbReference>
<dbReference type="InterPro" id="IPR006151">
    <property type="entry name" value="Shikm_DH/Glu-tRNA_Rdtase"/>
</dbReference>
<dbReference type="NCBIfam" id="TIGR00507">
    <property type="entry name" value="aroE"/>
    <property type="match status" value="1"/>
</dbReference>
<dbReference type="PANTHER" id="PTHR21089:SF1">
    <property type="entry name" value="BIFUNCTIONAL 3-DEHYDROQUINATE DEHYDRATASE_SHIKIMATE DEHYDROGENASE, CHLOROPLASTIC"/>
    <property type="match status" value="1"/>
</dbReference>
<dbReference type="PANTHER" id="PTHR21089">
    <property type="entry name" value="SHIKIMATE DEHYDROGENASE"/>
    <property type="match status" value="1"/>
</dbReference>
<dbReference type="Pfam" id="PF18317">
    <property type="entry name" value="SDH_C"/>
    <property type="match status" value="1"/>
</dbReference>
<dbReference type="Pfam" id="PF01488">
    <property type="entry name" value="Shikimate_DH"/>
    <property type="match status" value="1"/>
</dbReference>
<dbReference type="Pfam" id="PF08501">
    <property type="entry name" value="Shikimate_dh_N"/>
    <property type="match status" value="1"/>
</dbReference>
<dbReference type="SUPFAM" id="SSF53223">
    <property type="entry name" value="Aminoacid dehydrogenase-like, N-terminal domain"/>
    <property type="match status" value="1"/>
</dbReference>
<dbReference type="SUPFAM" id="SSF51735">
    <property type="entry name" value="NAD(P)-binding Rossmann-fold domains"/>
    <property type="match status" value="1"/>
</dbReference>
<name>AROE_DICT6</name>
<reference key="1">
    <citation type="journal article" date="2014" name="Genome Announc.">
        <title>Complete Genome Sequence of the Extreme Thermophile Dictyoglomus thermophilum H-6-12.</title>
        <authorList>
            <person name="Coil D.A."/>
            <person name="Badger J.H."/>
            <person name="Forberger H.C."/>
            <person name="Riggs F."/>
            <person name="Madupu R."/>
            <person name="Fedorova N."/>
            <person name="Ward N."/>
            <person name="Robb F.T."/>
            <person name="Eisen J.A."/>
        </authorList>
    </citation>
    <scope>NUCLEOTIDE SEQUENCE [LARGE SCALE GENOMIC DNA]</scope>
    <source>
        <strain>ATCC 35947 / DSM 3960 / H-6-12</strain>
    </source>
</reference>
<organism>
    <name type="scientific">Dictyoglomus thermophilum (strain ATCC 35947 / DSM 3960 / H-6-12)</name>
    <dbReference type="NCBI Taxonomy" id="309799"/>
    <lineage>
        <taxon>Bacteria</taxon>
        <taxon>Pseudomonadati</taxon>
        <taxon>Dictyoglomota</taxon>
        <taxon>Dictyoglomia</taxon>
        <taxon>Dictyoglomales</taxon>
        <taxon>Dictyoglomaceae</taxon>
        <taxon>Dictyoglomus</taxon>
    </lineage>
</organism>